<name>ESR2_ONCMY</name>
<organism>
    <name type="scientific">Oncorhynchus mykiss</name>
    <name type="common">Rainbow trout</name>
    <name type="synonym">Salmo gairdneri</name>
    <dbReference type="NCBI Taxonomy" id="8022"/>
    <lineage>
        <taxon>Eukaryota</taxon>
        <taxon>Metazoa</taxon>
        <taxon>Chordata</taxon>
        <taxon>Craniata</taxon>
        <taxon>Vertebrata</taxon>
        <taxon>Euteleostomi</taxon>
        <taxon>Actinopterygii</taxon>
        <taxon>Neopterygii</taxon>
        <taxon>Teleostei</taxon>
        <taxon>Protacanthopterygii</taxon>
        <taxon>Salmoniformes</taxon>
        <taxon>Salmonidae</taxon>
        <taxon>Salmoninae</taxon>
        <taxon>Oncorhynchus</taxon>
    </lineage>
</organism>
<evidence type="ECO:0000250" key="1"/>
<evidence type="ECO:0000255" key="2">
    <source>
        <dbReference type="PROSITE-ProRule" id="PRU00407"/>
    </source>
</evidence>
<evidence type="ECO:0000255" key="3">
    <source>
        <dbReference type="PROSITE-ProRule" id="PRU01189"/>
    </source>
</evidence>
<evidence type="ECO:0000305" key="4"/>
<reference key="1">
    <citation type="submission" date="2000-07" db="EMBL/GenBank/DDBJ databases">
        <title>Molecular cloning of an estrogen receptor beta subtype from rainbow trout.</title>
        <authorList>
            <person name="Haugg M."/>
            <person name="Ackermann G."/>
            <person name="Fent K."/>
        </authorList>
    </citation>
    <scope>NUCLEOTIDE SEQUENCE [MRNA]</scope>
</reference>
<protein>
    <recommendedName>
        <fullName>Estrogen receptor beta</fullName>
        <shortName>ER-beta</shortName>
    </recommendedName>
    <alternativeName>
        <fullName>Nuclear receptor subfamily 3 group A member 2</fullName>
    </alternativeName>
</protein>
<proteinExistence type="evidence at transcript level"/>
<keyword id="KW-0238">DNA-binding</keyword>
<keyword id="KW-0446">Lipid-binding</keyword>
<keyword id="KW-0479">Metal-binding</keyword>
<keyword id="KW-0539">Nucleus</keyword>
<keyword id="KW-0675">Receptor</keyword>
<keyword id="KW-0754">Steroid-binding</keyword>
<keyword id="KW-0804">Transcription</keyword>
<keyword id="KW-0805">Transcription regulation</keyword>
<keyword id="KW-0862">Zinc</keyword>
<keyword id="KW-0863">Zinc-finger</keyword>
<dbReference type="EMBL" id="AJ289883">
    <property type="protein sequence ID" value="CAC06714.1"/>
    <property type="molecule type" value="mRNA"/>
</dbReference>
<dbReference type="RefSeq" id="NP_001123457.1">
    <property type="nucleotide sequence ID" value="NM_001129985.1"/>
</dbReference>
<dbReference type="SMR" id="P57782"/>
<dbReference type="GeneID" id="100170205"/>
<dbReference type="CTD" id="100170205"/>
<dbReference type="Proteomes" id="UP000694395">
    <property type="component" value="Unplaced"/>
</dbReference>
<dbReference type="GO" id="GO:0005634">
    <property type="term" value="C:nucleus"/>
    <property type="evidence" value="ECO:0000314"/>
    <property type="project" value="AgBase"/>
</dbReference>
<dbReference type="GO" id="GO:0030284">
    <property type="term" value="F:nuclear estrogen receptor activity"/>
    <property type="evidence" value="ECO:0007669"/>
    <property type="project" value="InterPro"/>
</dbReference>
<dbReference type="GO" id="GO:0043565">
    <property type="term" value="F:sequence-specific DNA binding"/>
    <property type="evidence" value="ECO:0007669"/>
    <property type="project" value="InterPro"/>
</dbReference>
<dbReference type="GO" id="GO:0005496">
    <property type="term" value="F:steroid binding"/>
    <property type="evidence" value="ECO:0000250"/>
    <property type="project" value="UniProtKB"/>
</dbReference>
<dbReference type="GO" id="GO:1990239">
    <property type="term" value="F:steroid hormone binding"/>
    <property type="evidence" value="ECO:0000314"/>
    <property type="project" value="AgBase"/>
</dbReference>
<dbReference type="GO" id="GO:0008270">
    <property type="term" value="F:zinc ion binding"/>
    <property type="evidence" value="ECO:0007669"/>
    <property type="project" value="UniProtKB-KW"/>
</dbReference>
<dbReference type="GO" id="GO:0071392">
    <property type="term" value="P:cellular response to estradiol stimulus"/>
    <property type="evidence" value="ECO:0007669"/>
    <property type="project" value="InterPro"/>
</dbReference>
<dbReference type="GO" id="GO:0030520">
    <property type="term" value="P:estrogen receptor signaling pathway"/>
    <property type="evidence" value="ECO:0007669"/>
    <property type="project" value="InterPro"/>
</dbReference>
<dbReference type="GO" id="GO:0032355">
    <property type="term" value="P:response to estradiol"/>
    <property type="evidence" value="ECO:0000314"/>
    <property type="project" value="AgBase"/>
</dbReference>
<dbReference type="CDD" id="cd07171">
    <property type="entry name" value="NR_DBD_ER"/>
    <property type="match status" value="1"/>
</dbReference>
<dbReference type="CDD" id="cd06949">
    <property type="entry name" value="NR_LBD_ER"/>
    <property type="match status" value="1"/>
</dbReference>
<dbReference type="FunFam" id="1.10.565.10:FF:000010">
    <property type="entry name" value="Estrogen receptor"/>
    <property type="match status" value="1"/>
</dbReference>
<dbReference type="FunFam" id="3.30.50.10:FF:000014">
    <property type="entry name" value="Estrogen receptor beta"/>
    <property type="match status" value="1"/>
</dbReference>
<dbReference type="Gene3D" id="3.30.50.10">
    <property type="entry name" value="Erythroid Transcription Factor GATA-1, subunit A"/>
    <property type="match status" value="1"/>
</dbReference>
<dbReference type="Gene3D" id="1.10.565.10">
    <property type="entry name" value="Retinoid X Receptor"/>
    <property type="match status" value="1"/>
</dbReference>
<dbReference type="InterPro" id="IPR021064">
    <property type="entry name" value="ER-beta-like_N"/>
</dbReference>
<dbReference type="InterPro" id="IPR028355">
    <property type="entry name" value="ER-beta/gamma"/>
</dbReference>
<dbReference type="InterPro" id="IPR024178">
    <property type="entry name" value="Est_rcpt/est-rel_rcp"/>
</dbReference>
<dbReference type="InterPro" id="IPR035500">
    <property type="entry name" value="NHR-like_dom_sf"/>
</dbReference>
<dbReference type="InterPro" id="IPR000536">
    <property type="entry name" value="Nucl_hrmn_rcpt_lig-bd"/>
</dbReference>
<dbReference type="InterPro" id="IPR050200">
    <property type="entry name" value="Nuclear_hormone_rcpt_NR3"/>
</dbReference>
<dbReference type="InterPro" id="IPR001723">
    <property type="entry name" value="Nuclear_hrmn_rcpt"/>
</dbReference>
<dbReference type="InterPro" id="IPR001628">
    <property type="entry name" value="Znf_hrmn_rcpt"/>
</dbReference>
<dbReference type="InterPro" id="IPR013088">
    <property type="entry name" value="Znf_NHR/GATA"/>
</dbReference>
<dbReference type="PANTHER" id="PTHR48092">
    <property type="entry name" value="KNIRPS-RELATED PROTEIN-RELATED"/>
    <property type="match status" value="1"/>
</dbReference>
<dbReference type="Pfam" id="PF12497">
    <property type="entry name" value="ERbeta_N"/>
    <property type="match status" value="1"/>
</dbReference>
<dbReference type="Pfam" id="PF00104">
    <property type="entry name" value="Hormone_recep"/>
    <property type="match status" value="1"/>
</dbReference>
<dbReference type="Pfam" id="PF00105">
    <property type="entry name" value="zf-C4"/>
    <property type="match status" value="1"/>
</dbReference>
<dbReference type="PIRSF" id="PIRSF500102">
    <property type="entry name" value="ER-b"/>
    <property type="match status" value="1"/>
</dbReference>
<dbReference type="PIRSF" id="PIRSF002527">
    <property type="entry name" value="ER-like_NR"/>
    <property type="match status" value="1"/>
</dbReference>
<dbReference type="PRINTS" id="PR00398">
    <property type="entry name" value="STRDHORMONER"/>
</dbReference>
<dbReference type="PRINTS" id="PR00047">
    <property type="entry name" value="STROIDFINGER"/>
</dbReference>
<dbReference type="SMART" id="SM00430">
    <property type="entry name" value="HOLI"/>
    <property type="match status" value="1"/>
</dbReference>
<dbReference type="SMART" id="SM00399">
    <property type="entry name" value="ZnF_C4"/>
    <property type="match status" value="1"/>
</dbReference>
<dbReference type="SUPFAM" id="SSF57716">
    <property type="entry name" value="Glucocorticoid receptor-like (DNA-binding domain)"/>
    <property type="match status" value="1"/>
</dbReference>
<dbReference type="SUPFAM" id="SSF48508">
    <property type="entry name" value="Nuclear receptor ligand-binding domain"/>
    <property type="match status" value="1"/>
</dbReference>
<dbReference type="PROSITE" id="PS51843">
    <property type="entry name" value="NR_LBD"/>
    <property type="match status" value="1"/>
</dbReference>
<dbReference type="PROSITE" id="PS00031">
    <property type="entry name" value="NUCLEAR_REC_DBD_1"/>
    <property type="match status" value="1"/>
</dbReference>
<dbReference type="PROSITE" id="PS51030">
    <property type="entry name" value="NUCLEAR_REC_DBD_2"/>
    <property type="match status" value="1"/>
</dbReference>
<sequence>MHQQSPVDDVTALNSSALTMSEYPEGESPLQLQDVDSSRVGGHILSPIFNSSSPSLPVESHPVCIQSPYTDLGHDFTTLPFYSPALLGYGTSPLSECSSVRQSLSPTLFWPPHSQVSSLALHQQHTRLQQNHPTGGTWTELTPHDHSEEEYRKPLVKRVADAEETSTSLRGKADMHYCAVCSDYASGYHYGVWSCEGCKAFFKRSIQGHNDYICPATNQCTIDKNRRKSCQACRLRKCYEVGMMKCGLRRDRGSYQQRGAQQKRLARFSGRMRTSGPRSQEMKSVPCPLSGNEVVNMALTPEELIARIMDAEPPEIYLMKDMKKPFTEANVMMSLTNLADKELVHMISWAKKVPGFVELSLFDQVHLLECCWLEVLMLGLMWRSVNHPGKLIFSPDLSLSRDEGSCVQGFVEIFDMLLAATSRFRELKLQREEYVCLKAMILLNSNMCLSSSEGGEELQRRSKLLCLLDSVTDALVWAISKTGLSFQQRSTRLAHLLMLLSHIRHLSNKGMDHLHCMKMKKMVPLYDLLLEMLDAHIMHGSRLSHSGPAPKESTGVQEATLSVLKNDL</sequence>
<comment type="function">
    <text>Binds estrogens with an affinity similar to that of ER-alpha, and activates expression of reporter genes containing estrogen response elements (ERE) in an estrogen-dependent manner.</text>
</comment>
<comment type="subunit">
    <text evidence="1">Binds DNA as a homodimer. Can form a heterodimer with ER-alpha (By similarity).</text>
</comment>
<comment type="subcellular location">
    <subcellularLocation>
        <location>Nucleus</location>
    </subcellularLocation>
</comment>
<comment type="domain">
    <text>Composed of three domains: a modulating N-terminal domain, a DNA-binding domain and a C-terminal ligand-binding domain.</text>
</comment>
<comment type="similarity">
    <text evidence="4">Belongs to the nuclear hormone receptor family. NR3 subfamily.</text>
</comment>
<accession>P57782</accession>
<gene>
    <name type="primary">esr2</name>
    <name type="synonym">nr3a2</name>
</gene>
<feature type="chain" id="PRO_0000053656" description="Estrogen receptor beta">
    <location>
        <begin position="1"/>
        <end position="568"/>
    </location>
</feature>
<feature type="domain" description="NR LBD" evidence="3">
    <location>
        <begin position="300"/>
        <end position="536"/>
    </location>
</feature>
<feature type="DNA-binding region" description="Nuclear receptor" evidence="2">
    <location>
        <begin position="178"/>
        <end position="243"/>
    </location>
</feature>
<feature type="zinc finger region" description="NR C4-type" evidence="2">
    <location>
        <begin position="178"/>
        <end position="198"/>
    </location>
</feature>
<feature type="zinc finger region" description="NR C4-type" evidence="2">
    <location>
        <begin position="214"/>
        <end position="238"/>
    </location>
</feature>
<feature type="region of interest" description="Modulating">
    <location>
        <begin position="1"/>
        <end position="177"/>
    </location>
</feature>